<accession>Q09893</accession>
<name>YAI5_SCHPO</name>
<comment type="similarity">
    <text evidence="1">Belongs to the SSM1 family.</text>
</comment>
<feature type="chain" id="PRO_0000116432" description="Uncharacterized protein C24B11.05">
    <location>
        <begin position="1"/>
        <end position="226"/>
    </location>
</feature>
<proteinExistence type="inferred from homology"/>
<gene>
    <name type="ORF">SPAC24B11.05</name>
</gene>
<evidence type="ECO:0000305" key="1"/>
<dbReference type="EMBL" id="CU329670">
    <property type="protein sequence ID" value="CAA91770.1"/>
    <property type="molecule type" value="Genomic_DNA"/>
</dbReference>
<dbReference type="PIR" id="S62550">
    <property type="entry name" value="S62550"/>
</dbReference>
<dbReference type="RefSeq" id="NP_592842.1">
    <property type="nucleotide sequence ID" value="NM_001018243.2"/>
</dbReference>
<dbReference type="SMR" id="Q09893"/>
<dbReference type="BioGRID" id="278061">
    <property type="interactions" value="15"/>
</dbReference>
<dbReference type="FunCoup" id="Q09893">
    <property type="interactions" value="356"/>
</dbReference>
<dbReference type="STRING" id="284812.Q09893"/>
<dbReference type="PaxDb" id="4896-SPAC24B11.05.1"/>
<dbReference type="EnsemblFungi" id="SPAC24B11.05.1">
    <property type="protein sequence ID" value="SPAC24B11.05.1:pep"/>
    <property type="gene ID" value="SPAC24B11.05"/>
</dbReference>
<dbReference type="KEGG" id="spo:2541562"/>
<dbReference type="PomBase" id="SPAC24B11.05"/>
<dbReference type="VEuPathDB" id="FungiDB:SPAC24B11.05"/>
<dbReference type="eggNOG" id="KOG3109">
    <property type="taxonomic scope" value="Eukaryota"/>
</dbReference>
<dbReference type="HOGENOM" id="CLU_059493_0_0_1"/>
<dbReference type="InParanoid" id="Q09893"/>
<dbReference type="OMA" id="YPHHVNL"/>
<dbReference type="PhylomeDB" id="Q09893"/>
<dbReference type="PRO" id="PR:Q09893"/>
<dbReference type="Proteomes" id="UP000002485">
    <property type="component" value="Chromosome I"/>
</dbReference>
<dbReference type="GO" id="GO:0005829">
    <property type="term" value="C:cytosol"/>
    <property type="evidence" value="ECO:0007005"/>
    <property type="project" value="PomBase"/>
</dbReference>
<dbReference type="GO" id="GO:0005634">
    <property type="term" value="C:nucleus"/>
    <property type="evidence" value="ECO:0007005"/>
    <property type="project" value="PomBase"/>
</dbReference>
<dbReference type="GO" id="GO:0008253">
    <property type="term" value="F:5'-nucleotidase activity"/>
    <property type="evidence" value="ECO:0000255"/>
    <property type="project" value="PomBase"/>
</dbReference>
<dbReference type="GO" id="GO:0008252">
    <property type="term" value="F:nucleotidase activity"/>
    <property type="evidence" value="ECO:0000318"/>
    <property type="project" value="GO_Central"/>
</dbReference>
<dbReference type="GO" id="GO:0009166">
    <property type="term" value="P:nucleotide catabolic process"/>
    <property type="evidence" value="ECO:0000318"/>
    <property type="project" value="GO_Central"/>
</dbReference>
<dbReference type="GO" id="GO:0006206">
    <property type="term" value="P:pyrimidine nucleobase metabolic process"/>
    <property type="evidence" value="ECO:0000318"/>
    <property type="project" value="GO_Central"/>
</dbReference>
<dbReference type="CDD" id="cd02604">
    <property type="entry name" value="HAD_5NT"/>
    <property type="match status" value="1"/>
</dbReference>
<dbReference type="Gene3D" id="1.10.150.450">
    <property type="match status" value="1"/>
</dbReference>
<dbReference type="Gene3D" id="3.40.50.1000">
    <property type="entry name" value="HAD superfamily/HAD-like"/>
    <property type="match status" value="1"/>
</dbReference>
<dbReference type="InterPro" id="IPR036412">
    <property type="entry name" value="HAD-like_sf"/>
</dbReference>
<dbReference type="InterPro" id="IPR006439">
    <property type="entry name" value="HAD-SF_hydro_IA"/>
</dbReference>
<dbReference type="InterPro" id="IPR023214">
    <property type="entry name" value="HAD_sf"/>
</dbReference>
<dbReference type="InterPro" id="IPR010237">
    <property type="entry name" value="Pyr-5-nucltdase"/>
</dbReference>
<dbReference type="InterPro" id="IPR052791">
    <property type="entry name" value="SSM1_domain"/>
</dbReference>
<dbReference type="NCBIfam" id="TIGR01509">
    <property type="entry name" value="HAD-SF-IA-v3"/>
    <property type="match status" value="1"/>
</dbReference>
<dbReference type="NCBIfam" id="TIGR01993">
    <property type="entry name" value="Pyr-5-nucltdase"/>
    <property type="match status" value="1"/>
</dbReference>
<dbReference type="PANTHER" id="PTHR47438">
    <property type="entry name" value="PHOSPHATE METABOLISM PROTEIN 8-RELATED"/>
    <property type="match status" value="1"/>
</dbReference>
<dbReference type="PANTHER" id="PTHR47438:SF1">
    <property type="entry name" value="PHOSPHATE METABOLISM PROTEIN 8-RELATED"/>
    <property type="match status" value="1"/>
</dbReference>
<dbReference type="Pfam" id="PF00702">
    <property type="entry name" value="Hydrolase"/>
    <property type="match status" value="1"/>
</dbReference>
<dbReference type="SFLD" id="SFLDG01132">
    <property type="entry name" value="C1.5.3:_5'-Nucleotidase_Like"/>
    <property type="match status" value="1"/>
</dbReference>
<dbReference type="SFLD" id="SFLDS00003">
    <property type="entry name" value="Haloacid_Dehalogenase"/>
    <property type="match status" value="1"/>
</dbReference>
<dbReference type="SUPFAM" id="SSF56784">
    <property type="entry name" value="HAD-like"/>
    <property type="match status" value="1"/>
</dbReference>
<keyword id="KW-1185">Reference proteome</keyword>
<sequence length="226" mass="26514">MTVEQKIIFFDLDNCLYPKSYKIHNMMAARITAFFSDKLGIPTEEAERLREVYYRHYGIAIRGLVLHHEIDAVDYDQRVDQSLPLEKVIKKDEVLREMLLELRKKYKCWIFTNAYIVHANRVLKYLGIEDCFDGITYCDYNAKDLIAKPMPEMYERVMREAGVTDKDKCIFVDDSYGNILGAREFGWKYTVQLVEHGDPLPQPQAGSHVIRDIHKFKHLLDEIDGE</sequence>
<organism>
    <name type="scientific">Schizosaccharomyces pombe (strain 972 / ATCC 24843)</name>
    <name type="common">Fission yeast</name>
    <dbReference type="NCBI Taxonomy" id="284812"/>
    <lineage>
        <taxon>Eukaryota</taxon>
        <taxon>Fungi</taxon>
        <taxon>Dikarya</taxon>
        <taxon>Ascomycota</taxon>
        <taxon>Taphrinomycotina</taxon>
        <taxon>Schizosaccharomycetes</taxon>
        <taxon>Schizosaccharomycetales</taxon>
        <taxon>Schizosaccharomycetaceae</taxon>
        <taxon>Schizosaccharomyces</taxon>
    </lineage>
</organism>
<reference key="1">
    <citation type="journal article" date="2002" name="Nature">
        <title>The genome sequence of Schizosaccharomyces pombe.</title>
        <authorList>
            <person name="Wood V."/>
            <person name="Gwilliam R."/>
            <person name="Rajandream M.A."/>
            <person name="Lyne M.H."/>
            <person name="Lyne R."/>
            <person name="Stewart A."/>
            <person name="Sgouros J.G."/>
            <person name="Peat N."/>
            <person name="Hayles J."/>
            <person name="Baker S.G."/>
            <person name="Basham D."/>
            <person name="Bowman S."/>
            <person name="Brooks K."/>
            <person name="Brown D."/>
            <person name="Brown S."/>
            <person name="Chillingworth T."/>
            <person name="Churcher C.M."/>
            <person name="Collins M."/>
            <person name="Connor R."/>
            <person name="Cronin A."/>
            <person name="Davis P."/>
            <person name="Feltwell T."/>
            <person name="Fraser A."/>
            <person name="Gentles S."/>
            <person name="Goble A."/>
            <person name="Hamlin N."/>
            <person name="Harris D.E."/>
            <person name="Hidalgo J."/>
            <person name="Hodgson G."/>
            <person name="Holroyd S."/>
            <person name="Hornsby T."/>
            <person name="Howarth S."/>
            <person name="Huckle E.J."/>
            <person name="Hunt S."/>
            <person name="Jagels K."/>
            <person name="James K.D."/>
            <person name="Jones L."/>
            <person name="Jones M."/>
            <person name="Leather S."/>
            <person name="McDonald S."/>
            <person name="McLean J."/>
            <person name="Mooney P."/>
            <person name="Moule S."/>
            <person name="Mungall K.L."/>
            <person name="Murphy L.D."/>
            <person name="Niblett D."/>
            <person name="Odell C."/>
            <person name="Oliver K."/>
            <person name="O'Neil S."/>
            <person name="Pearson D."/>
            <person name="Quail M.A."/>
            <person name="Rabbinowitsch E."/>
            <person name="Rutherford K.M."/>
            <person name="Rutter S."/>
            <person name="Saunders D."/>
            <person name="Seeger K."/>
            <person name="Sharp S."/>
            <person name="Skelton J."/>
            <person name="Simmonds M.N."/>
            <person name="Squares R."/>
            <person name="Squares S."/>
            <person name="Stevens K."/>
            <person name="Taylor K."/>
            <person name="Taylor R.G."/>
            <person name="Tivey A."/>
            <person name="Walsh S.V."/>
            <person name="Warren T."/>
            <person name="Whitehead S."/>
            <person name="Woodward J.R."/>
            <person name="Volckaert G."/>
            <person name="Aert R."/>
            <person name="Robben J."/>
            <person name="Grymonprez B."/>
            <person name="Weltjens I."/>
            <person name="Vanstreels E."/>
            <person name="Rieger M."/>
            <person name="Schaefer M."/>
            <person name="Mueller-Auer S."/>
            <person name="Gabel C."/>
            <person name="Fuchs M."/>
            <person name="Duesterhoeft A."/>
            <person name="Fritzc C."/>
            <person name="Holzer E."/>
            <person name="Moestl D."/>
            <person name="Hilbert H."/>
            <person name="Borzym K."/>
            <person name="Langer I."/>
            <person name="Beck A."/>
            <person name="Lehrach H."/>
            <person name="Reinhardt R."/>
            <person name="Pohl T.M."/>
            <person name="Eger P."/>
            <person name="Zimmermann W."/>
            <person name="Wedler H."/>
            <person name="Wambutt R."/>
            <person name="Purnelle B."/>
            <person name="Goffeau A."/>
            <person name="Cadieu E."/>
            <person name="Dreano S."/>
            <person name="Gloux S."/>
            <person name="Lelaure V."/>
            <person name="Mottier S."/>
            <person name="Galibert F."/>
            <person name="Aves S.J."/>
            <person name="Xiang Z."/>
            <person name="Hunt C."/>
            <person name="Moore K."/>
            <person name="Hurst S.M."/>
            <person name="Lucas M."/>
            <person name="Rochet M."/>
            <person name="Gaillardin C."/>
            <person name="Tallada V.A."/>
            <person name="Garzon A."/>
            <person name="Thode G."/>
            <person name="Daga R.R."/>
            <person name="Cruzado L."/>
            <person name="Jimenez J."/>
            <person name="Sanchez M."/>
            <person name="del Rey F."/>
            <person name="Benito J."/>
            <person name="Dominguez A."/>
            <person name="Revuelta J.L."/>
            <person name="Moreno S."/>
            <person name="Armstrong J."/>
            <person name="Forsburg S.L."/>
            <person name="Cerutti L."/>
            <person name="Lowe T."/>
            <person name="McCombie W.R."/>
            <person name="Paulsen I."/>
            <person name="Potashkin J."/>
            <person name="Shpakovski G.V."/>
            <person name="Ussery D."/>
            <person name="Barrell B.G."/>
            <person name="Nurse P."/>
        </authorList>
    </citation>
    <scope>NUCLEOTIDE SEQUENCE [LARGE SCALE GENOMIC DNA]</scope>
    <source>
        <strain>972 / ATCC 24843</strain>
    </source>
</reference>
<protein>
    <recommendedName>
        <fullName>Uncharacterized protein C24B11.05</fullName>
    </recommendedName>
</protein>